<feature type="chain" id="PRO_0000232416" description="Serine/threonine-protein kinase 32C">
    <location>
        <begin position="1"/>
        <end position="488"/>
    </location>
</feature>
<feature type="domain" description="Protein kinase" evidence="3">
    <location>
        <begin position="94"/>
        <end position="354"/>
    </location>
</feature>
<feature type="region of interest" description="Disordered" evidence="5">
    <location>
        <begin position="1"/>
        <end position="56"/>
    </location>
</feature>
<feature type="region of interest" description="Disordered" evidence="5">
    <location>
        <begin position="397"/>
        <end position="420"/>
    </location>
</feature>
<feature type="region of interest" description="Disordered" evidence="5">
    <location>
        <begin position="443"/>
        <end position="488"/>
    </location>
</feature>
<feature type="compositionally biased region" description="Low complexity" evidence="5">
    <location>
        <begin position="24"/>
        <end position="33"/>
    </location>
</feature>
<feature type="compositionally biased region" description="Basic residues" evidence="5">
    <location>
        <begin position="397"/>
        <end position="406"/>
    </location>
</feature>
<feature type="active site" description="Proton acceptor" evidence="1 3 4">
    <location>
        <position position="217"/>
    </location>
</feature>
<feature type="binding site" evidence="1 3">
    <location>
        <begin position="100"/>
        <end position="108"/>
    </location>
    <ligand>
        <name>ATP</name>
        <dbReference type="ChEBI" id="CHEBI:30616"/>
    </ligand>
</feature>
<feature type="binding site" evidence="1 3">
    <location>
        <position position="123"/>
    </location>
    <ligand>
        <name>ATP</name>
        <dbReference type="ChEBI" id="CHEBI:30616"/>
    </ligand>
</feature>
<feature type="modified residue" description="Phosphoserine" evidence="11">
    <location>
        <position position="10"/>
    </location>
</feature>
<feature type="modified residue" description="Phosphoserine" evidence="11">
    <location>
        <position position="17"/>
    </location>
</feature>
<feature type="modified residue" description="Phosphoserine" evidence="2">
    <location>
        <position position="18"/>
    </location>
</feature>
<feature type="sequence conflict" description="In Ref. 1; BAA95027." evidence="6" ref="1">
    <original>D</original>
    <variation>E</variation>
    <location>
        <position position="30"/>
    </location>
</feature>
<evidence type="ECO:0000250" key="1">
    <source>
        <dbReference type="UniProtKB" id="Q60592"/>
    </source>
</evidence>
<evidence type="ECO:0000250" key="2">
    <source>
        <dbReference type="UniProtKB" id="Q86UX6"/>
    </source>
</evidence>
<evidence type="ECO:0000255" key="3">
    <source>
        <dbReference type="PROSITE-ProRule" id="PRU00159"/>
    </source>
</evidence>
<evidence type="ECO:0000255" key="4">
    <source>
        <dbReference type="PROSITE-ProRule" id="PRU10027"/>
    </source>
</evidence>
<evidence type="ECO:0000256" key="5">
    <source>
        <dbReference type="SAM" id="MobiDB-lite"/>
    </source>
</evidence>
<evidence type="ECO:0000305" key="6"/>
<evidence type="ECO:0000312" key="7">
    <source>
        <dbReference type="EMBL" id="AAH26457.1"/>
    </source>
</evidence>
<evidence type="ECO:0000312" key="8">
    <source>
        <dbReference type="EMBL" id="BAA95027.1"/>
    </source>
</evidence>
<evidence type="ECO:0000312" key="9">
    <source>
        <dbReference type="EMBL" id="BAC32730.1"/>
    </source>
</evidence>
<evidence type="ECO:0000312" key="10">
    <source>
        <dbReference type="MGI" id="MGI:2385336"/>
    </source>
</evidence>
<evidence type="ECO:0007744" key="11">
    <source>
    </source>
</evidence>
<name>ST32C_MOUSE</name>
<protein>
    <recommendedName>
        <fullName>Serine/threonine-protein kinase 32C</fullName>
        <ecNumber>2.7.11.1</ecNumber>
    </recommendedName>
</protein>
<sequence length="488" mass="55263">MRSGAERRGSSAAAPPSSPPPGRARPAGSDVSPALPPPAASQPRARDAGDARAQPRPLFQWSKWKKRMSMSSISSGSARRPVFDDKEDVNFDHFQILRAIGKGSFGKVCIVQKRDTEKMYAMKYMNKQQCIERDEVRNVFRELEILQEIEHVFLVNLWYSFQDEEDMFMVVDLLLGGDLRYHLQQNVQFSEDTVRLYICEMALALDYLRSQHIIHRDVKPDNILLDEQGHAHLTDFNIATIIKDGERATALAGTKPYMAPEIFHSFVNGGTGYSFEVDWWSVGVMAYELLRGWRPYDIHSSNAVESLVQLFSTVSVQYVPTWSKEMVALLRKLLTVNPEHRFSSLQDMQTAPSLAHVLWDDLSEKKVEPGFVPNKGRLHCDPTFELEEMILESRPLHKKKKRLAKNKSRDSSRDSSQSENDYLQDCLDAIQQDFVIFNREKLKRSQELMSEPPPGPETSDMTDSTADSEAEPTALPMCGSICPSSGSS</sequence>
<accession>Q8QZV4</accession>
<accession>Q9JJG4</accession>
<organism>
    <name type="scientific">Mus musculus</name>
    <name type="common">Mouse</name>
    <dbReference type="NCBI Taxonomy" id="10090"/>
    <lineage>
        <taxon>Eukaryota</taxon>
        <taxon>Metazoa</taxon>
        <taxon>Chordata</taxon>
        <taxon>Craniata</taxon>
        <taxon>Vertebrata</taxon>
        <taxon>Euteleostomi</taxon>
        <taxon>Mammalia</taxon>
        <taxon>Eutheria</taxon>
        <taxon>Euarchontoglires</taxon>
        <taxon>Glires</taxon>
        <taxon>Rodentia</taxon>
        <taxon>Myomorpha</taxon>
        <taxon>Muroidea</taxon>
        <taxon>Muridae</taxon>
        <taxon>Murinae</taxon>
        <taxon>Mus</taxon>
        <taxon>Mus</taxon>
    </lineage>
</organism>
<comment type="catalytic activity">
    <reaction evidence="1">
        <text>L-seryl-[protein] + ATP = O-phospho-L-seryl-[protein] + ADP + H(+)</text>
        <dbReference type="Rhea" id="RHEA:17989"/>
        <dbReference type="Rhea" id="RHEA-COMP:9863"/>
        <dbReference type="Rhea" id="RHEA-COMP:11604"/>
        <dbReference type="ChEBI" id="CHEBI:15378"/>
        <dbReference type="ChEBI" id="CHEBI:29999"/>
        <dbReference type="ChEBI" id="CHEBI:30616"/>
        <dbReference type="ChEBI" id="CHEBI:83421"/>
        <dbReference type="ChEBI" id="CHEBI:456216"/>
        <dbReference type="EC" id="2.7.11.1"/>
    </reaction>
</comment>
<comment type="catalytic activity">
    <reaction evidence="1">
        <text>L-threonyl-[protein] + ATP = O-phospho-L-threonyl-[protein] + ADP + H(+)</text>
        <dbReference type="Rhea" id="RHEA:46608"/>
        <dbReference type="Rhea" id="RHEA-COMP:11060"/>
        <dbReference type="Rhea" id="RHEA-COMP:11605"/>
        <dbReference type="ChEBI" id="CHEBI:15378"/>
        <dbReference type="ChEBI" id="CHEBI:30013"/>
        <dbReference type="ChEBI" id="CHEBI:30616"/>
        <dbReference type="ChEBI" id="CHEBI:61977"/>
        <dbReference type="ChEBI" id="CHEBI:456216"/>
        <dbReference type="EC" id="2.7.11.1"/>
    </reaction>
</comment>
<comment type="cofactor">
    <cofactor evidence="1">
        <name>Mg(2+)</name>
        <dbReference type="ChEBI" id="CHEBI:18420"/>
    </cofactor>
</comment>
<comment type="similarity">
    <text evidence="3">Belongs to the protein kinase superfamily. Ser/Thr protein kinase family.</text>
</comment>
<gene>
    <name evidence="7 10" type="primary">Stk32c</name>
    <name evidence="10" type="synonym">Pkek</name>
    <name type="ORF">MNCb-1563</name>
</gene>
<keyword id="KW-0067">ATP-binding</keyword>
<keyword id="KW-0418">Kinase</keyword>
<keyword id="KW-0460">Magnesium</keyword>
<keyword id="KW-0479">Metal-binding</keyword>
<keyword id="KW-0547">Nucleotide-binding</keyword>
<keyword id="KW-0597">Phosphoprotein</keyword>
<keyword id="KW-1185">Reference proteome</keyword>
<keyword id="KW-0723">Serine/threonine-protein kinase</keyword>
<keyword id="KW-0808">Transferase</keyword>
<dbReference type="EC" id="2.7.11.1"/>
<dbReference type="EMBL" id="AB041542">
    <property type="protein sequence ID" value="BAA95027.1"/>
    <property type="molecule type" value="mRNA"/>
</dbReference>
<dbReference type="EMBL" id="AK046439">
    <property type="protein sequence ID" value="BAC32730.1"/>
    <property type="molecule type" value="mRNA"/>
</dbReference>
<dbReference type="EMBL" id="BC026457">
    <property type="protein sequence ID" value="AAH26457.1"/>
    <property type="molecule type" value="mRNA"/>
</dbReference>
<dbReference type="CCDS" id="CCDS21952.1"/>
<dbReference type="RefSeq" id="NP_001156012.1">
    <property type="nucleotide sequence ID" value="NM_001162540.1"/>
</dbReference>
<dbReference type="RefSeq" id="NP_067277.2">
    <property type="nucleotide sequence ID" value="NM_021302.4"/>
</dbReference>
<dbReference type="SMR" id="Q8QZV4"/>
<dbReference type="BioGRID" id="208304">
    <property type="interactions" value="3"/>
</dbReference>
<dbReference type="FunCoup" id="Q8QZV4">
    <property type="interactions" value="937"/>
</dbReference>
<dbReference type="IntAct" id="Q8QZV4">
    <property type="interactions" value="3"/>
</dbReference>
<dbReference type="STRING" id="10090.ENSMUSP00000016125"/>
<dbReference type="GlyGen" id="Q8QZV4">
    <property type="glycosylation" value="1 site, 1 N-linked glycan (1 site)"/>
</dbReference>
<dbReference type="iPTMnet" id="Q8QZV4"/>
<dbReference type="PhosphoSitePlus" id="Q8QZV4"/>
<dbReference type="SwissPalm" id="Q8QZV4"/>
<dbReference type="PaxDb" id="10090-ENSMUSP00000016125"/>
<dbReference type="PeptideAtlas" id="Q8QZV4"/>
<dbReference type="ProteomicsDB" id="254571"/>
<dbReference type="Antibodypedia" id="19318">
    <property type="antibodies" value="139 antibodies from 29 providers"/>
</dbReference>
<dbReference type="DNASU" id="57740"/>
<dbReference type="Ensembl" id="ENSMUST00000016125.12">
    <property type="protein sequence ID" value="ENSMUSP00000016125.6"/>
    <property type="gene ID" value="ENSMUSG00000015981.13"/>
</dbReference>
<dbReference type="GeneID" id="57740"/>
<dbReference type="KEGG" id="mmu:57740"/>
<dbReference type="UCSC" id="uc009kfl.2">
    <property type="organism name" value="mouse"/>
</dbReference>
<dbReference type="AGR" id="MGI:2385336"/>
<dbReference type="CTD" id="282974"/>
<dbReference type="MGI" id="MGI:2385336">
    <property type="gene designation" value="Stk32c"/>
</dbReference>
<dbReference type="VEuPathDB" id="HostDB:ENSMUSG00000015981"/>
<dbReference type="eggNOG" id="KOG0598">
    <property type="taxonomic scope" value="Eukaryota"/>
</dbReference>
<dbReference type="GeneTree" id="ENSGT00940000160573"/>
<dbReference type="InParanoid" id="Q8QZV4"/>
<dbReference type="OMA" id="HFILLRC"/>
<dbReference type="OrthoDB" id="354826at2759"/>
<dbReference type="PhylomeDB" id="Q8QZV4"/>
<dbReference type="TreeFam" id="TF313395"/>
<dbReference type="BioGRID-ORCS" id="57740">
    <property type="hits" value="1 hit in 79 CRISPR screens"/>
</dbReference>
<dbReference type="ChiTaRS" id="Stk32c">
    <property type="organism name" value="mouse"/>
</dbReference>
<dbReference type="PRO" id="PR:Q8QZV4"/>
<dbReference type="Proteomes" id="UP000000589">
    <property type="component" value="Chromosome 7"/>
</dbReference>
<dbReference type="RNAct" id="Q8QZV4">
    <property type="molecule type" value="protein"/>
</dbReference>
<dbReference type="Bgee" id="ENSMUSG00000015981">
    <property type="expression patterns" value="Expressed in striatum and 55 other cell types or tissues"/>
</dbReference>
<dbReference type="ExpressionAtlas" id="Q8QZV4">
    <property type="expression patterns" value="baseline and differential"/>
</dbReference>
<dbReference type="GO" id="GO:0005524">
    <property type="term" value="F:ATP binding"/>
    <property type="evidence" value="ECO:0007669"/>
    <property type="project" value="UniProtKB-KW"/>
</dbReference>
<dbReference type="GO" id="GO:0046872">
    <property type="term" value="F:metal ion binding"/>
    <property type="evidence" value="ECO:0007669"/>
    <property type="project" value="UniProtKB-KW"/>
</dbReference>
<dbReference type="GO" id="GO:0106310">
    <property type="term" value="F:protein serine kinase activity"/>
    <property type="evidence" value="ECO:0007669"/>
    <property type="project" value="RHEA"/>
</dbReference>
<dbReference type="GO" id="GO:0004674">
    <property type="term" value="F:protein serine/threonine kinase activity"/>
    <property type="evidence" value="ECO:0007669"/>
    <property type="project" value="UniProtKB-KW"/>
</dbReference>
<dbReference type="CDD" id="cd05578">
    <property type="entry name" value="STKc_Yank1"/>
    <property type="match status" value="1"/>
</dbReference>
<dbReference type="FunFam" id="1.10.510.10:FF:000169">
    <property type="entry name" value="Serine/threonine-protein kinase 32A"/>
    <property type="match status" value="1"/>
</dbReference>
<dbReference type="FunFam" id="3.30.200.20:FF:000347">
    <property type="entry name" value="serine/threonine-protein kinase 32A isoform X2"/>
    <property type="match status" value="1"/>
</dbReference>
<dbReference type="FunFam" id="3.30.200.20:FF:000160">
    <property type="entry name" value="Serine/threonine-protein kinase 32C"/>
    <property type="match status" value="1"/>
</dbReference>
<dbReference type="Gene3D" id="3.30.200.20">
    <property type="entry name" value="Phosphorylase Kinase, domain 1"/>
    <property type="match status" value="2"/>
</dbReference>
<dbReference type="Gene3D" id="1.10.510.10">
    <property type="entry name" value="Transferase(Phosphotransferase) domain 1"/>
    <property type="match status" value="1"/>
</dbReference>
<dbReference type="InterPro" id="IPR011009">
    <property type="entry name" value="Kinase-like_dom_sf"/>
</dbReference>
<dbReference type="InterPro" id="IPR000719">
    <property type="entry name" value="Prot_kinase_dom"/>
</dbReference>
<dbReference type="InterPro" id="IPR017441">
    <property type="entry name" value="Protein_kinase_ATP_BS"/>
</dbReference>
<dbReference type="InterPro" id="IPR008271">
    <property type="entry name" value="Ser/Thr_kinase_AS"/>
</dbReference>
<dbReference type="PANTHER" id="PTHR24355">
    <property type="entry name" value="G PROTEIN-COUPLED RECEPTOR KINASE/RIBOSOMAL PROTEIN S6 KINASE"/>
    <property type="match status" value="1"/>
</dbReference>
<dbReference type="PANTHER" id="PTHR24355:SF32">
    <property type="entry name" value="SERINE_THREONINE KINASE 32C"/>
    <property type="match status" value="1"/>
</dbReference>
<dbReference type="Pfam" id="PF00069">
    <property type="entry name" value="Pkinase"/>
    <property type="match status" value="1"/>
</dbReference>
<dbReference type="SMART" id="SM00220">
    <property type="entry name" value="S_TKc"/>
    <property type="match status" value="1"/>
</dbReference>
<dbReference type="SUPFAM" id="SSF56112">
    <property type="entry name" value="Protein kinase-like (PK-like)"/>
    <property type="match status" value="1"/>
</dbReference>
<dbReference type="PROSITE" id="PS00107">
    <property type="entry name" value="PROTEIN_KINASE_ATP"/>
    <property type="match status" value="1"/>
</dbReference>
<dbReference type="PROSITE" id="PS50011">
    <property type="entry name" value="PROTEIN_KINASE_DOM"/>
    <property type="match status" value="1"/>
</dbReference>
<dbReference type="PROSITE" id="PS00108">
    <property type="entry name" value="PROTEIN_KINASE_ST"/>
    <property type="match status" value="1"/>
</dbReference>
<reference evidence="8" key="1">
    <citation type="submission" date="2000-04" db="EMBL/GenBank/DDBJ databases">
        <title>Isolation of full-length cDNA clones from mouse brain cDNA library made by oligo-capping method.</title>
        <authorList>
            <person name="Osada N."/>
            <person name="Kusuda J."/>
            <person name="Tanuma R."/>
            <person name="Ito A."/>
            <person name="Hirata M."/>
            <person name="Sugano S."/>
            <person name="Hashimoto K."/>
        </authorList>
    </citation>
    <scope>NUCLEOTIDE SEQUENCE [LARGE SCALE MRNA]</scope>
    <source>
        <strain evidence="8">C57BL/6J</strain>
        <tissue evidence="8">Brain</tissue>
    </source>
</reference>
<reference evidence="9" key="2">
    <citation type="journal article" date="2005" name="Science">
        <title>The transcriptional landscape of the mammalian genome.</title>
        <authorList>
            <person name="Carninci P."/>
            <person name="Kasukawa T."/>
            <person name="Katayama S."/>
            <person name="Gough J."/>
            <person name="Frith M.C."/>
            <person name="Maeda N."/>
            <person name="Oyama R."/>
            <person name="Ravasi T."/>
            <person name="Lenhard B."/>
            <person name="Wells C."/>
            <person name="Kodzius R."/>
            <person name="Shimokawa K."/>
            <person name="Bajic V.B."/>
            <person name="Brenner S.E."/>
            <person name="Batalov S."/>
            <person name="Forrest A.R."/>
            <person name="Zavolan M."/>
            <person name="Davis M.J."/>
            <person name="Wilming L.G."/>
            <person name="Aidinis V."/>
            <person name="Allen J.E."/>
            <person name="Ambesi-Impiombato A."/>
            <person name="Apweiler R."/>
            <person name="Aturaliya R.N."/>
            <person name="Bailey T.L."/>
            <person name="Bansal M."/>
            <person name="Baxter L."/>
            <person name="Beisel K.W."/>
            <person name="Bersano T."/>
            <person name="Bono H."/>
            <person name="Chalk A.M."/>
            <person name="Chiu K.P."/>
            <person name="Choudhary V."/>
            <person name="Christoffels A."/>
            <person name="Clutterbuck D.R."/>
            <person name="Crowe M.L."/>
            <person name="Dalla E."/>
            <person name="Dalrymple B.P."/>
            <person name="de Bono B."/>
            <person name="Della Gatta G."/>
            <person name="di Bernardo D."/>
            <person name="Down T."/>
            <person name="Engstrom P."/>
            <person name="Fagiolini M."/>
            <person name="Faulkner G."/>
            <person name="Fletcher C.F."/>
            <person name="Fukushima T."/>
            <person name="Furuno M."/>
            <person name="Futaki S."/>
            <person name="Gariboldi M."/>
            <person name="Georgii-Hemming P."/>
            <person name="Gingeras T.R."/>
            <person name="Gojobori T."/>
            <person name="Green R.E."/>
            <person name="Gustincich S."/>
            <person name="Harbers M."/>
            <person name="Hayashi Y."/>
            <person name="Hensch T.K."/>
            <person name="Hirokawa N."/>
            <person name="Hill D."/>
            <person name="Huminiecki L."/>
            <person name="Iacono M."/>
            <person name="Ikeo K."/>
            <person name="Iwama A."/>
            <person name="Ishikawa T."/>
            <person name="Jakt M."/>
            <person name="Kanapin A."/>
            <person name="Katoh M."/>
            <person name="Kawasawa Y."/>
            <person name="Kelso J."/>
            <person name="Kitamura H."/>
            <person name="Kitano H."/>
            <person name="Kollias G."/>
            <person name="Krishnan S.P."/>
            <person name="Kruger A."/>
            <person name="Kummerfeld S.K."/>
            <person name="Kurochkin I.V."/>
            <person name="Lareau L.F."/>
            <person name="Lazarevic D."/>
            <person name="Lipovich L."/>
            <person name="Liu J."/>
            <person name="Liuni S."/>
            <person name="McWilliam S."/>
            <person name="Madan Babu M."/>
            <person name="Madera M."/>
            <person name="Marchionni L."/>
            <person name="Matsuda H."/>
            <person name="Matsuzawa S."/>
            <person name="Miki H."/>
            <person name="Mignone F."/>
            <person name="Miyake S."/>
            <person name="Morris K."/>
            <person name="Mottagui-Tabar S."/>
            <person name="Mulder N."/>
            <person name="Nakano N."/>
            <person name="Nakauchi H."/>
            <person name="Ng P."/>
            <person name="Nilsson R."/>
            <person name="Nishiguchi S."/>
            <person name="Nishikawa S."/>
            <person name="Nori F."/>
            <person name="Ohara O."/>
            <person name="Okazaki Y."/>
            <person name="Orlando V."/>
            <person name="Pang K.C."/>
            <person name="Pavan W.J."/>
            <person name="Pavesi G."/>
            <person name="Pesole G."/>
            <person name="Petrovsky N."/>
            <person name="Piazza S."/>
            <person name="Reed J."/>
            <person name="Reid J.F."/>
            <person name="Ring B.Z."/>
            <person name="Ringwald M."/>
            <person name="Rost B."/>
            <person name="Ruan Y."/>
            <person name="Salzberg S.L."/>
            <person name="Sandelin A."/>
            <person name="Schneider C."/>
            <person name="Schoenbach C."/>
            <person name="Sekiguchi K."/>
            <person name="Semple C.A."/>
            <person name="Seno S."/>
            <person name="Sessa L."/>
            <person name="Sheng Y."/>
            <person name="Shibata Y."/>
            <person name="Shimada H."/>
            <person name="Shimada K."/>
            <person name="Silva D."/>
            <person name="Sinclair B."/>
            <person name="Sperling S."/>
            <person name="Stupka E."/>
            <person name="Sugiura K."/>
            <person name="Sultana R."/>
            <person name="Takenaka Y."/>
            <person name="Taki K."/>
            <person name="Tammoja K."/>
            <person name="Tan S.L."/>
            <person name="Tang S."/>
            <person name="Taylor M.S."/>
            <person name="Tegner J."/>
            <person name="Teichmann S.A."/>
            <person name="Ueda H.R."/>
            <person name="van Nimwegen E."/>
            <person name="Verardo R."/>
            <person name="Wei C.L."/>
            <person name="Yagi K."/>
            <person name="Yamanishi H."/>
            <person name="Zabarovsky E."/>
            <person name="Zhu S."/>
            <person name="Zimmer A."/>
            <person name="Hide W."/>
            <person name="Bult C."/>
            <person name="Grimmond S.M."/>
            <person name="Teasdale R.D."/>
            <person name="Liu E.T."/>
            <person name="Brusic V."/>
            <person name="Quackenbush J."/>
            <person name="Wahlestedt C."/>
            <person name="Mattick J.S."/>
            <person name="Hume D.A."/>
            <person name="Kai C."/>
            <person name="Sasaki D."/>
            <person name="Tomaru Y."/>
            <person name="Fukuda S."/>
            <person name="Kanamori-Katayama M."/>
            <person name="Suzuki M."/>
            <person name="Aoki J."/>
            <person name="Arakawa T."/>
            <person name="Iida J."/>
            <person name="Imamura K."/>
            <person name="Itoh M."/>
            <person name="Kato T."/>
            <person name="Kawaji H."/>
            <person name="Kawagashira N."/>
            <person name="Kawashima T."/>
            <person name="Kojima M."/>
            <person name="Kondo S."/>
            <person name="Konno H."/>
            <person name="Nakano K."/>
            <person name="Ninomiya N."/>
            <person name="Nishio T."/>
            <person name="Okada M."/>
            <person name="Plessy C."/>
            <person name="Shibata K."/>
            <person name="Shiraki T."/>
            <person name="Suzuki S."/>
            <person name="Tagami M."/>
            <person name="Waki K."/>
            <person name="Watahiki A."/>
            <person name="Okamura-Oho Y."/>
            <person name="Suzuki H."/>
            <person name="Kawai J."/>
            <person name="Hayashizaki Y."/>
        </authorList>
    </citation>
    <scope>NUCLEOTIDE SEQUENCE [LARGE SCALE MRNA]</scope>
    <source>
        <strain evidence="9">C57BL/6J</strain>
        <tissue evidence="9">Corpora quadrigemina</tissue>
    </source>
</reference>
<reference evidence="7" key="3">
    <citation type="journal article" date="2004" name="Genome Res.">
        <title>The status, quality, and expansion of the NIH full-length cDNA project: the Mammalian Gene Collection (MGC).</title>
        <authorList>
            <consortium name="The MGC Project Team"/>
        </authorList>
    </citation>
    <scope>NUCLEOTIDE SEQUENCE [LARGE SCALE MRNA]</scope>
    <source>
        <tissue evidence="7">Eye</tissue>
    </source>
</reference>
<reference key="4">
    <citation type="journal article" date="2010" name="Cell">
        <title>A tissue-specific atlas of mouse protein phosphorylation and expression.</title>
        <authorList>
            <person name="Huttlin E.L."/>
            <person name="Jedrychowski M.P."/>
            <person name="Elias J.E."/>
            <person name="Goswami T."/>
            <person name="Rad R."/>
            <person name="Beausoleil S.A."/>
            <person name="Villen J."/>
            <person name="Haas W."/>
            <person name="Sowa M.E."/>
            <person name="Gygi S.P."/>
        </authorList>
    </citation>
    <scope>PHOSPHORYLATION [LARGE SCALE ANALYSIS] AT SER-10 AND SER-17</scope>
    <scope>IDENTIFICATION BY MASS SPECTROMETRY [LARGE SCALE ANALYSIS]</scope>
    <source>
        <tissue>Brain</tissue>
    </source>
</reference>
<proteinExistence type="evidence at protein level"/>